<organism>
    <name type="scientific">Homo sapiens</name>
    <name type="common">Human</name>
    <dbReference type="NCBI Taxonomy" id="9606"/>
    <lineage>
        <taxon>Eukaryota</taxon>
        <taxon>Metazoa</taxon>
        <taxon>Chordata</taxon>
        <taxon>Craniata</taxon>
        <taxon>Vertebrata</taxon>
        <taxon>Euteleostomi</taxon>
        <taxon>Mammalia</taxon>
        <taxon>Eutheria</taxon>
        <taxon>Euarchontoglires</taxon>
        <taxon>Primates</taxon>
        <taxon>Haplorrhini</taxon>
        <taxon>Catarrhini</taxon>
        <taxon>Hominidae</taxon>
        <taxon>Homo</taxon>
    </lineage>
</organism>
<protein>
    <recommendedName>
        <fullName>GSK-3-binding protein FRAT2</fullName>
    </recommendedName>
    <alternativeName>
        <fullName>Frequently rearranged in advanced T-cell lymphomas 2</fullName>
        <shortName>FRAT-2</shortName>
    </alternativeName>
</protein>
<comment type="function">
    <text>Positively regulates the Wnt signaling pathway by stabilizing beta-catenin through the association with GSK-3.</text>
</comment>
<comment type="subunit">
    <text>Binds GSK-3 and prevents GSK-3-dependent phosphorylation.</text>
</comment>
<comment type="similarity">
    <text evidence="3">Belongs to the GSK-3-binding protein family.</text>
</comment>
<accession>O75474</accession>
<accession>Q5JTI0</accession>
<accession>Q8WUL9</accession>
<accession>Q9BYG2</accession>
<reference key="1">
    <citation type="journal article" date="2001" name="Biochem. Biophys. Res. Commun.">
        <title>Molecular cloning and characterization of FRAT2, encoding a positive regulator of the WNT signaling pathway.</title>
        <authorList>
            <person name="Saitoh T."/>
            <person name="Moriwaki J."/>
            <person name="Koike J."/>
            <person name="Takagi A."/>
            <person name="Miwa T."/>
            <person name="Shiokawa K."/>
            <person name="Katoh M."/>
        </authorList>
    </citation>
    <scope>NUCLEOTIDE SEQUENCE [MRNA]</scope>
    <source>
        <tissue>Fetal lung</tissue>
    </source>
</reference>
<reference key="2">
    <citation type="journal article" date="2004" name="Nature">
        <title>The DNA sequence and comparative analysis of human chromosome 10.</title>
        <authorList>
            <person name="Deloukas P."/>
            <person name="Earthrowl M.E."/>
            <person name="Grafham D.V."/>
            <person name="Rubenfield M."/>
            <person name="French L."/>
            <person name="Steward C.A."/>
            <person name="Sims S.K."/>
            <person name="Jones M.C."/>
            <person name="Searle S."/>
            <person name="Scott C."/>
            <person name="Howe K."/>
            <person name="Hunt S.E."/>
            <person name="Andrews T.D."/>
            <person name="Gilbert J.G.R."/>
            <person name="Swarbreck D."/>
            <person name="Ashurst J.L."/>
            <person name="Taylor A."/>
            <person name="Battles J."/>
            <person name="Bird C.P."/>
            <person name="Ainscough R."/>
            <person name="Almeida J.P."/>
            <person name="Ashwell R.I.S."/>
            <person name="Ambrose K.D."/>
            <person name="Babbage A.K."/>
            <person name="Bagguley C.L."/>
            <person name="Bailey J."/>
            <person name="Banerjee R."/>
            <person name="Bates K."/>
            <person name="Beasley H."/>
            <person name="Bray-Allen S."/>
            <person name="Brown A.J."/>
            <person name="Brown J.Y."/>
            <person name="Burford D.C."/>
            <person name="Burrill W."/>
            <person name="Burton J."/>
            <person name="Cahill P."/>
            <person name="Camire D."/>
            <person name="Carter N.P."/>
            <person name="Chapman J.C."/>
            <person name="Clark S.Y."/>
            <person name="Clarke G."/>
            <person name="Clee C.M."/>
            <person name="Clegg S."/>
            <person name="Corby N."/>
            <person name="Coulson A."/>
            <person name="Dhami P."/>
            <person name="Dutta I."/>
            <person name="Dunn M."/>
            <person name="Faulkner L."/>
            <person name="Frankish A."/>
            <person name="Frankland J.A."/>
            <person name="Garner P."/>
            <person name="Garnett J."/>
            <person name="Gribble S."/>
            <person name="Griffiths C."/>
            <person name="Grocock R."/>
            <person name="Gustafson E."/>
            <person name="Hammond S."/>
            <person name="Harley J.L."/>
            <person name="Hart E."/>
            <person name="Heath P.D."/>
            <person name="Ho T.P."/>
            <person name="Hopkins B."/>
            <person name="Horne J."/>
            <person name="Howden P.J."/>
            <person name="Huckle E."/>
            <person name="Hynds C."/>
            <person name="Johnson C."/>
            <person name="Johnson D."/>
            <person name="Kana A."/>
            <person name="Kay M."/>
            <person name="Kimberley A.M."/>
            <person name="Kershaw J.K."/>
            <person name="Kokkinaki M."/>
            <person name="Laird G.K."/>
            <person name="Lawlor S."/>
            <person name="Lee H.M."/>
            <person name="Leongamornlert D.A."/>
            <person name="Laird G."/>
            <person name="Lloyd C."/>
            <person name="Lloyd D.M."/>
            <person name="Loveland J."/>
            <person name="Lovell J."/>
            <person name="McLaren S."/>
            <person name="McLay K.E."/>
            <person name="McMurray A."/>
            <person name="Mashreghi-Mohammadi M."/>
            <person name="Matthews L."/>
            <person name="Milne S."/>
            <person name="Nickerson T."/>
            <person name="Nguyen M."/>
            <person name="Overton-Larty E."/>
            <person name="Palmer S.A."/>
            <person name="Pearce A.V."/>
            <person name="Peck A.I."/>
            <person name="Pelan S."/>
            <person name="Phillimore B."/>
            <person name="Porter K."/>
            <person name="Rice C.M."/>
            <person name="Rogosin A."/>
            <person name="Ross M.T."/>
            <person name="Sarafidou T."/>
            <person name="Sehra H.K."/>
            <person name="Shownkeen R."/>
            <person name="Skuce C.D."/>
            <person name="Smith M."/>
            <person name="Standring L."/>
            <person name="Sycamore N."/>
            <person name="Tester J."/>
            <person name="Thorpe A."/>
            <person name="Torcasso W."/>
            <person name="Tracey A."/>
            <person name="Tromans A."/>
            <person name="Tsolas J."/>
            <person name="Wall M."/>
            <person name="Walsh J."/>
            <person name="Wang H."/>
            <person name="Weinstock K."/>
            <person name="West A.P."/>
            <person name="Willey D.L."/>
            <person name="Whitehead S.L."/>
            <person name="Wilming L."/>
            <person name="Wray P.W."/>
            <person name="Young L."/>
            <person name="Chen Y."/>
            <person name="Lovering R.C."/>
            <person name="Moschonas N.K."/>
            <person name="Siebert R."/>
            <person name="Fechtel K."/>
            <person name="Bentley D."/>
            <person name="Durbin R.M."/>
            <person name="Hubbard T."/>
            <person name="Doucette-Stamm L."/>
            <person name="Beck S."/>
            <person name="Smith D.R."/>
            <person name="Rogers J."/>
        </authorList>
    </citation>
    <scope>NUCLEOTIDE SEQUENCE [LARGE SCALE GENOMIC DNA]</scope>
</reference>
<reference key="3">
    <citation type="journal article" date="2004" name="Genome Res.">
        <title>The status, quality, and expansion of the NIH full-length cDNA project: the Mammalian Gene Collection (MGC).</title>
        <authorList>
            <consortium name="The MGC Project Team"/>
        </authorList>
    </citation>
    <scope>NUCLEOTIDE SEQUENCE [LARGE SCALE MRNA]</scope>
    <source>
        <tissue>Placenta</tissue>
    </source>
</reference>
<reference key="4">
    <citation type="journal article" date="1998" name="Cell">
        <title>GBP, an inhibitor of GSK-3, is implicated in Xenopus development and oncogenesis.</title>
        <authorList>
            <person name="Yost C."/>
            <person name="Farr G.H. III"/>
            <person name="Pierce S.B."/>
            <person name="Ferkey D.M."/>
            <person name="Chen M.M."/>
            <person name="Kimelman D."/>
        </authorList>
    </citation>
    <scope>NUCLEOTIDE SEQUENCE [MRNA] OF 121-233</scope>
</reference>
<dbReference type="EMBL" id="AB045118">
    <property type="protein sequence ID" value="BAB39165.1"/>
    <property type="molecule type" value="mRNA"/>
</dbReference>
<dbReference type="EMBL" id="AL355490">
    <property type="status" value="NOT_ANNOTATED_CDS"/>
    <property type="molecule type" value="Genomic_DNA"/>
</dbReference>
<dbReference type="EMBL" id="BC020165">
    <property type="protein sequence ID" value="AAH20165.1"/>
    <property type="molecule type" value="mRNA"/>
</dbReference>
<dbReference type="EMBL" id="AF062739">
    <property type="protein sequence ID" value="AAC39786.1"/>
    <property type="molecule type" value="mRNA"/>
</dbReference>
<dbReference type="CCDS" id="CCDS7456.1"/>
<dbReference type="PIR" id="JC7618">
    <property type="entry name" value="JC7618"/>
</dbReference>
<dbReference type="RefSeq" id="NP_036215.1">
    <property type="nucleotide sequence ID" value="NM_012083.3"/>
</dbReference>
<dbReference type="SMR" id="O75474"/>
<dbReference type="BioGRID" id="116974">
    <property type="interactions" value="26"/>
</dbReference>
<dbReference type="ComplexPortal" id="CPX-462">
    <property type="entry name" value="Nuclear export complex FRAT2-GSK3B"/>
</dbReference>
<dbReference type="FunCoup" id="O75474">
    <property type="interactions" value="359"/>
</dbReference>
<dbReference type="IntAct" id="O75474">
    <property type="interactions" value="25"/>
</dbReference>
<dbReference type="MINT" id="O75474"/>
<dbReference type="STRING" id="9606.ENSP00000360058"/>
<dbReference type="iPTMnet" id="O75474"/>
<dbReference type="PhosphoSitePlus" id="O75474"/>
<dbReference type="BioMuta" id="FRAT2"/>
<dbReference type="jPOST" id="O75474"/>
<dbReference type="MassIVE" id="O75474"/>
<dbReference type="PaxDb" id="9606-ENSP00000360058"/>
<dbReference type="PeptideAtlas" id="O75474"/>
<dbReference type="ProteomicsDB" id="50036"/>
<dbReference type="Pumba" id="O75474"/>
<dbReference type="Antibodypedia" id="30842">
    <property type="antibodies" value="139 antibodies from 24 providers"/>
</dbReference>
<dbReference type="DNASU" id="23401"/>
<dbReference type="Ensembl" id="ENST00000371019.4">
    <property type="protein sequence ID" value="ENSP00000360058.2"/>
    <property type="gene ID" value="ENSG00000181274.7"/>
</dbReference>
<dbReference type="GeneID" id="23401"/>
<dbReference type="KEGG" id="hsa:23401"/>
<dbReference type="MANE-Select" id="ENST00000371019.4">
    <property type="protein sequence ID" value="ENSP00000360058.2"/>
    <property type="RefSeq nucleotide sequence ID" value="NM_012083.3"/>
    <property type="RefSeq protein sequence ID" value="NP_036215.1"/>
</dbReference>
<dbReference type="UCSC" id="uc001knd.2">
    <property type="organism name" value="human"/>
</dbReference>
<dbReference type="AGR" id="HGNC:16048"/>
<dbReference type="CTD" id="23401"/>
<dbReference type="DisGeNET" id="23401"/>
<dbReference type="GeneCards" id="FRAT2"/>
<dbReference type="HGNC" id="HGNC:16048">
    <property type="gene designation" value="FRAT2"/>
</dbReference>
<dbReference type="HPA" id="ENSG00000181274">
    <property type="expression patterns" value="Low tissue specificity"/>
</dbReference>
<dbReference type="MIM" id="605006">
    <property type="type" value="gene"/>
</dbReference>
<dbReference type="neXtProt" id="NX_O75474"/>
<dbReference type="OpenTargets" id="ENSG00000181274"/>
<dbReference type="PharmGKB" id="PA28362"/>
<dbReference type="VEuPathDB" id="HostDB:ENSG00000181274"/>
<dbReference type="eggNOG" id="ENOG502S0IC">
    <property type="taxonomic scope" value="Eukaryota"/>
</dbReference>
<dbReference type="GeneTree" id="ENSGT00390000007081"/>
<dbReference type="HOGENOM" id="CLU_101225_1_0_1"/>
<dbReference type="InParanoid" id="O75474"/>
<dbReference type="OMA" id="PWNKKRI"/>
<dbReference type="OrthoDB" id="6381246at2759"/>
<dbReference type="PAN-GO" id="O75474">
    <property type="GO annotations" value="1 GO annotation based on evolutionary models"/>
</dbReference>
<dbReference type="PhylomeDB" id="O75474"/>
<dbReference type="TreeFam" id="TF330804"/>
<dbReference type="PathwayCommons" id="O75474"/>
<dbReference type="Reactome" id="R-HSA-196299">
    <property type="pathway name" value="Beta-catenin phosphorylation cascade"/>
</dbReference>
<dbReference type="Reactome" id="R-HSA-4641262">
    <property type="pathway name" value="Disassembly of the destruction complex and recruitment of AXIN to the membrane"/>
</dbReference>
<dbReference type="SignaLink" id="O75474"/>
<dbReference type="SIGNOR" id="O75474"/>
<dbReference type="BioGRID-ORCS" id="23401">
    <property type="hits" value="11 hits in 1154 CRISPR screens"/>
</dbReference>
<dbReference type="GeneWiki" id="FRAT2"/>
<dbReference type="GenomeRNAi" id="23401"/>
<dbReference type="Pharos" id="O75474">
    <property type="development level" value="Tbio"/>
</dbReference>
<dbReference type="PRO" id="PR:O75474"/>
<dbReference type="Proteomes" id="UP000005640">
    <property type="component" value="Chromosome 10"/>
</dbReference>
<dbReference type="RNAct" id="O75474">
    <property type="molecule type" value="protein"/>
</dbReference>
<dbReference type="Bgee" id="ENSG00000181274">
    <property type="expression patterns" value="Expressed in blood and 140 other cell types or tissues"/>
</dbReference>
<dbReference type="GO" id="GO:0005737">
    <property type="term" value="C:cytoplasm"/>
    <property type="evidence" value="ECO:0000250"/>
    <property type="project" value="ComplexPortal"/>
</dbReference>
<dbReference type="GO" id="GO:0005829">
    <property type="term" value="C:cytosol"/>
    <property type="evidence" value="ECO:0000304"/>
    <property type="project" value="Reactome"/>
</dbReference>
<dbReference type="GO" id="GO:0005634">
    <property type="term" value="C:nucleus"/>
    <property type="evidence" value="ECO:0000250"/>
    <property type="project" value="ComplexPortal"/>
</dbReference>
<dbReference type="GO" id="GO:0060070">
    <property type="term" value="P:canonical Wnt signaling pathway"/>
    <property type="evidence" value="ECO:0000250"/>
    <property type="project" value="ComplexPortal"/>
</dbReference>
<dbReference type="GO" id="GO:0046825">
    <property type="term" value="P:regulation of protein export from nucleus"/>
    <property type="evidence" value="ECO:0000250"/>
    <property type="project" value="ComplexPortal"/>
</dbReference>
<dbReference type="InterPro" id="IPR008014">
    <property type="entry name" value="GSK3-bd"/>
</dbReference>
<dbReference type="PANTHER" id="PTHR35154">
    <property type="entry name" value="GBP PROTEIN"/>
    <property type="match status" value="1"/>
</dbReference>
<dbReference type="PANTHER" id="PTHR35154:SF2">
    <property type="entry name" value="GSK-3-BINDING PROTEIN FRAT2"/>
    <property type="match status" value="1"/>
</dbReference>
<dbReference type="Pfam" id="PF05350">
    <property type="entry name" value="GSK-3_bind"/>
    <property type="match status" value="2"/>
</dbReference>
<feature type="chain" id="PRO_0000087334" description="GSK-3-binding protein FRAT2">
    <location>
        <begin position="1"/>
        <end position="233"/>
    </location>
</feature>
<feature type="region of interest" description="Disordered" evidence="2">
    <location>
        <begin position="1"/>
        <end position="24"/>
    </location>
</feature>
<feature type="region of interest" description="Involved in GSK-3 binding" evidence="1">
    <location>
        <begin position="174"/>
        <end position="196"/>
    </location>
</feature>
<feature type="region of interest" description="Disordered" evidence="2">
    <location>
        <begin position="204"/>
        <end position="233"/>
    </location>
</feature>
<feature type="compositionally biased region" description="Acidic residues" evidence="2">
    <location>
        <begin position="7"/>
        <end position="24"/>
    </location>
</feature>
<feature type="sequence conflict" description="In Ref. 3; AAH20165." evidence="3" ref="3">
    <original>A</original>
    <variation>T</variation>
    <location>
        <position position="83"/>
    </location>
</feature>
<proteinExistence type="evidence at protein level"/>
<evidence type="ECO:0000250" key="1"/>
<evidence type="ECO:0000256" key="2">
    <source>
        <dbReference type="SAM" id="MobiDB-lite"/>
    </source>
</evidence>
<evidence type="ECO:0000305" key="3"/>
<keyword id="KW-1267">Proteomics identification</keyword>
<keyword id="KW-1185">Reference proteome</keyword>
<keyword id="KW-0879">Wnt signaling pathway</keyword>
<name>FRAT2_HUMAN</name>
<sequence length="233" mass="24051">MPCRREEEEEAGEEAEGEEEEDDSFLLLQQSVTLGSSGEVDRLVAQIGETLQLDAAQDSPASPCAPPGVPLRAPGPLAAAVPADKARPPAVPLLLPPASAETVGPAPSGALRCALGDRGRVRGRAAPYCVAEVAAGPSALPGPCRRGWLRDAVTSRRLQQRRWTQAGARAGDDDPHRLLQQLVLSGNLIKEAVRRLQRAVAAVAATGPASAPGPGGGRSGPDRIALQPSGSLL</sequence>
<gene>
    <name type="primary">FRAT2</name>
</gene>